<organism>
    <name type="scientific">Streptococcus pneumoniae (strain P1031)</name>
    <dbReference type="NCBI Taxonomy" id="488223"/>
    <lineage>
        <taxon>Bacteria</taxon>
        <taxon>Bacillati</taxon>
        <taxon>Bacillota</taxon>
        <taxon>Bacilli</taxon>
        <taxon>Lactobacillales</taxon>
        <taxon>Streptococcaceae</taxon>
        <taxon>Streptococcus</taxon>
    </lineage>
</organism>
<proteinExistence type="inferred from homology"/>
<feature type="chain" id="PRO_1000124712" description="3-phosphoshikimate 1-carboxyvinyltransferase">
    <location>
        <begin position="1"/>
        <end position="427"/>
    </location>
</feature>
<feature type="active site" description="Proton acceptor" evidence="1">
    <location>
        <position position="312"/>
    </location>
</feature>
<feature type="binding site" evidence="1">
    <location>
        <position position="20"/>
    </location>
    <ligand>
        <name>3-phosphoshikimate</name>
        <dbReference type="ChEBI" id="CHEBI:145989"/>
    </ligand>
</feature>
<feature type="binding site" evidence="1">
    <location>
        <position position="20"/>
    </location>
    <ligand>
        <name>phosphoenolpyruvate</name>
        <dbReference type="ChEBI" id="CHEBI:58702"/>
    </ligand>
</feature>
<feature type="binding site" evidence="1">
    <location>
        <position position="21"/>
    </location>
    <ligand>
        <name>3-phosphoshikimate</name>
        <dbReference type="ChEBI" id="CHEBI:145989"/>
    </ligand>
</feature>
<feature type="binding site" evidence="1">
    <location>
        <position position="25"/>
    </location>
    <ligand>
        <name>3-phosphoshikimate</name>
        <dbReference type="ChEBI" id="CHEBI:145989"/>
    </ligand>
</feature>
<feature type="binding site" evidence="1">
    <location>
        <position position="92"/>
    </location>
    <ligand>
        <name>phosphoenolpyruvate</name>
        <dbReference type="ChEBI" id="CHEBI:58702"/>
    </ligand>
</feature>
<feature type="binding site" evidence="1">
    <location>
        <position position="120"/>
    </location>
    <ligand>
        <name>phosphoenolpyruvate</name>
        <dbReference type="ChEBI" id="CHEBI:58702"/>
    </ligand>
</feature>
<feature type="binding site" evidence="1">
    <location>
        <position position="166"/>
    </location>
    <ligand>
        <name>3-phosphoshikimate</name>
        <dbReference type="ChEBI" id="CHEBI:145989"/>
    </ligand>
</feature>
<feature type="binding site" evidence="1">
    <location>
        <position position="168"/>
    </location>
    <ligand>
        <name>3-phosphoshikimate</name>
        <dbReference type="ChEBI" id="CHEBI:145989"/>
    </ligand>
</feature>
<feature type="binding site" evidence="1">
    <location>
        <position position="168"/>
    </location>
    <ligand>
        <name>phosphoenolpyruvate</name>
        <dbReference type="ChEBI" id="CHEBI:58702"/>
    </ligand>
</feature>
<feature type="binding site" evidence="1">
    <location>
        <position position="312"/>
    </location>
    <ligand>
        <name>3-phosphoshikimate</name>
        <dbReference type="ChEBI" id="CHEBI:145989"/>
    </ligand>
</feature>
<feature type="binding site" evidence="1">
    <location>
        <position position="339"/>
    </location>
    <ligand>
        <name>3-phosphoshikimate</name>
        <dbReference type="ChEBI" id="CHEBI:145989"/>
    </ligand>
</feature>
<feature type="binding site" evidence="1">
    <location>
        <position position="343"/>
    </location>
    <ligand>
        <name>phosphoenolpyruvate</name>
        <dbReference type="ChEBI" id="CHEBI:58702"/>
    </ligand>
</feature>
<feature type="binding site" evidence="1">
    <location>
        <position position="385"/>
    </location>
    <ligand>
        <name>phosphoenolpyruvate</name>
        <dbReference type="ChEBI" id="CHEBI:58702"/>
    </ligand>
</feature>
<accession>C1CL80</accession>
<protein>
    <recommendedName>
        <fullName evidence="1">3-phosphoshikimate 1-carboxyvinyltransferase</fullName>
        <ecNumber evidence="1">2.5.1.19</ecNumber>
    </recommendedName>
    <alternativeName>
        <fullName evidence="1">5-enolpyruvylshikimate-3-phosphate synthase</fullName>
        <shortName evidence="1">EPSP synthase</shortName>
        <shortName evidence="1">EPSPS</shortName>
    </alternativeName>
</protein>
<dbReference type="EC" id="2.5.1.19" evidence="1"/>
<dbReference type="EMBL" id="CP000920">
    <property type="protein sequence ID" value="ACO20656.1"/>
    <property type="molecule type" value="Genomic_DNA"/>
</dbReference>
<dbReference type="RefSeq" id="WP_000769886.1">
    <property type="nucleotide sequence ID" value="NC_012467.1"/>
</dbReference>
<dbReference type="SMR" id="C1CL80"/>
<dbReference type="KEGG" id="spp:SPP_1391"/>
<dbReference type="HOGENOM" id="CLU_024321_0_1_9"/>
<dbReference type="UniPathway" id="UPA00053">
    <property type="reaction ID" value="UER00089"/>
</dbReference>
<dbReference type="GO" id="GO:0005737">
    <property type="term" value="C:cytoplasm"/>
    <property type="evidence" value="ECO:0007669"/>
    <property type="project" value="UniProtKB-SubCell"/>
</dbReference>
<dbReference type="GO" id="GO:0003866">
    <property type="term" value="F:3-phosphoshikimate 1-carboxyvinyltransferase activity"/>
    <property type="evidence" value="ECO:0007669"/>
    <property type="project" value="UniProtKB-UniRule"/>
</dbReference>
<dbReference type="GO" id="GO:0008652">
    <property type="term" value="P:amino acid biosynthetic process"/>
    <property type="evidence" value="ECO:0007669"/>
    <property type="project" value="UniProtKB-KW"/>
</dbReference>
<dbReference type="GO" id="GO:0009073">
    <property type="term" value="P:aromatic amino acid family biosynthetic process"/>
    <property type="evidence" value="ECO:0007669"/>
    <property type="project" value="UniProtKB-KW"/>
</dbReference>
<dbReference type="GO" id="GO:0009423">
    <property type="term" value="P:chorismate biosynthetic process"/>
    <property type="evidence" value="ECO:0007669"/>
    <property type="project" value="UniProtKB-UniRule"/>
</dbReference>
<dbReference type="CDD" id="cd01554">
    <property type="entry name" value="EPT-like"/>
    <property type="match status" value="1"/>
</dbReference>
<dbReference type="FunFam" id="3.65.10.10:FF:000005">
    <property type="entry name" value="3-phosphoshikimate 1-carboxyvinyltransferase"/>
    <property type="match status" value="1"/>
</dbReference>
<dbReference type="FunFam" id="3.65.10.10:FF:000006">
    <property type="entry name" value="3-phosphoshikimate 1-carboxyvinyltransferase"/>
    <property type="match status" value="1"/>
</dbReference>
<dbReference type="Gene3D" id="3.65.10.10">
    <property type="entry name" value="Enolpyruvate transferase domain"/>
    <property type="match status" value="2"/>
</dbReference>
<dbReference type="HAMAP" id="MF_00210">
    <property type="entry name" value="EPSP_synth"/>
    <property type="match status" value="1"/>
</dbReference>
<dbReference type="InterPro" id="IPR001986">
    <property type="entry name" value="Enolpyruvate_Tfrase_dom"/>
</dbReference>
<dbReference type="InterPro" id="IPR036968">
    <property type="entry name" value="Enolpyruvate_Tfrase_sf"/>
</dbReference>
<dbReference type="InterPro" id="IPR006264">
    <property type="entry name" value="EPSP_synthase"/>
</dbReference>
<dbReference type="InterPro" id="IPR023193">
    <property type="entry name" value="EPSP_synthase_CS"/>
</dbReference>
<dbReference type="InterPro" id="IPR013792">
    <property type="entry name" value="RNA3'P_cycl/enolpyr_Trfase_a/b"/>
</dbReference>
<dbReference type="NCBIfam" id="TIGR01356">
    <property type="entry name" value="aroA"/>
    <property type="match status" value="1"/>
</dbReference>
<dbReference type="PANTHER" id="PTHR21090">
    <property type="entry name" value="AROM/DEHYDROQUINATE SYNTHASE"/>
    <property type="match status" value="1"/>
</dbReference>
<dbReference type="PANTHER" id="PTHR21090:SF5">
    <property type="entry name" value="PENTAFUNCTIONAL AROM POLYPEPTIDE"/>
    <property type="match status" value="1"/>
</dbReference>
<dbReference type="Pfam" id="PF00275">
    <property type="entry name" value="EPSP_synthase"/>
    <property type="match status" value="1"/>
</dbReference>
<dbReference type="PIRSF" id="PIRSF000505">
    <property type="entry name" value="EPSPS"/>
    <property type="match status" value="1"/>
</dbReference>
<dbReference type="SUPFAM" id="SSF55205">
    <property type="entry name" value="EPT/RTPC-like"/>
    <property type="match status" value="1"/>
</dbReference>
<dbReference type="PROSITE" id="PS00104">
    <property type="entry name" value="EPSP_SYNTHASE_1"/>
    <property type="match status" value="1"/>
</dbReference>
<dbReference type="PROSITE" id="PS00885">
    <property type="entry name" value="EPSP_SYNTHASE_2"/>
    <property type="match status" value="1"/>
</dbReference>
<comment type="function">
    <text evidence="1">Catalyzes the transfer of the enolpyruvyl moiety of phosphoenolpyruvate (PEP) to the 5-hydroxyl of shikimate-3-phosphate (S3P) to produce enolpyruvyl shikimate-3-phosphate and inorganic phosphate.</text>
</comment>
<comment type="catalytic activity">
    <reaction evidence="1">
        <text>3-phosphoshikimate + phosphoenolpyruvate = 5-O-(1-carboxyvinyl)-3-phosphoshikimate + phosphate</text>
        <dbReference type="Rhea" id="RHEA:21256"/>
        <dbReference type="ChEBI" id="CHEBI:43474"/>
        <dbReference type="ChEBI" id="CHEBI:57701"/>
        <dbReference type="ChEBI" id="CHEBI:58702"/>
        <dbReference type="ChEBI" id="CHEBI:145989"/>
        <dbReference type="EC" id="2.5.1.19"/>
    </reaction>
    <physiologicalReaction direction="left-to-right" evidence="1">
        <dbReference type="Rhea" id="RHEA:21257"/>
    </physiologicalReaction>
</comment>
<comment type="pathway">
    <text evidence="1">Metabolic intermediate biosynthesis; chorismate biosynthesis; chorismate from D-erythrose 4-phosphate and phosphoenolpyruvate: step 6/7.</text>
</comment>
<comment type="subunit">
    <text evidence="1">Monomer.</text>
</comment>
<comment type="subcellular location">
    <subcellularLocation>
        <location evidence="1">Cytoplasm</location>
    </subcellularLocation>
</comment>
<comment type="similarity">
    <text evidence="1">Belongs to the EPSP synthase family.</text>
</comment>
<reference key="1">
    <citation type="journal article" date="2010" name="Genome Biol.">
        <title>Structure and dynamics of the pan-genome of Streptococcus pneumoniae and closely related species.</title>
        <authorList>
            <person name="Donati C."/>
            <person name="Hiller N.L."/>
            <person name="Tettelin H."/>
            <person name="Muzzi A."/>
            <person name="Croucher N.J."/>
            <person name="Angiuoli S.V."/>
            <person name="Oggioni M."/>
            <person name="Dunning Hotopp J.C."/>
            <person name="Hu F.Z."/>
            <person name="Riley D.R."/>
            <person name="Covacci A."/>
            <person name="Mitchell T.J."/>
            <person name="Bentley S.D."/>
            <person name="Kilian M."/>
            <person name="Ehrlich G.D."/>
            <person name="Rappuoli R."/>
            <person name="Moxon E.R."/>
            <person name="Masignani V."/>
        </authorList>
    </citation>
    <scope>NUCLEOTIDE SEQUENCE [LARGE SCALE GENOMIC DNA]</scope>
    <source>
        <strain>P1031</strain>
    </source>
</reference>
<sequence length="427" mass="45738">MKLKTNIRHLHGSIRVPGDKSISHRSIIFGSLAEGETKVYDILRGEDVLSTMQVFRDLGVEIEDKDGVITIQGVGMAGLKAPQNALNMGNSGTSIRLISGVLAGADFEVEMFGDDSLSKRPMDRVTLPLKKMGVSISGQTERDLPPLRLKGTKNLRPIHYELPIASAQVKSALMFAALQAKGESVIIEKECTRNHTEDMLKQFGGHLSVDGKKITVQGPQKLTGQKVVVPGDISSAAFWLVAGLIVPNSRLVLQNVGINETRTGIIDVIRAMGGKLEITEIDPVAKSSTLTVESSDLKGTEIGGALIPRLIDELPIIALLATQAQGVTVIKDAEELKVKETDRIQVVADALNSMGADITPTADGMIIKGKSALHGARVNTFGDHRIGMMTAIAALLVADGEVELDRAEAINTSYPSFFDDLESLIHG</sequence>
<name>AROA_STRZP</name>
<evidence type="ECO:0000255" key="1">
    <source>
        <dbReference type="HAMAP-Rule" id="MF_00210"/>
    </source>
</evidence>
<keyword id="KW-0028">Amino-acid biosynthesis</keyword>
<keyword id="KW-0057">Aromatic amino acid biosynthesis</keyword>
<keyword id="KW-0963">Cytoplasm</keyword>
<keyword id="KW-0808">Transferase</keyword>
<gene>
    <name evidence="1" type="primary">aroA</name>
    <name type="ordered locus">SPP_1391</name>
</gene>